<reference key="1">
    <citation type="journal article" date="2003" name="Proc. Natl. Acad. Sci. U.S.A.">
        <title>Complete genome sequence and analysis of Wolinella succinogenes.</title>
        <authorList>
            <person name="Baar C."/>
            <person name="Eppinger M."/>
            <person name="Raddatz G."/>
            <person name="Simon J."/>
            <person name="Lanz C."/>
            <person name="Klimmek O."/>
            <person name="Nandakumar R."/>
            <person name="Gross R."/>
            <person name="Rosinus A."/>
            <person name="Keller H."/>
            <person name="Jagtap P."/>
            <person name="Linke B."/>
            <person name="Meyer F."/>
            <person name="Lederer H."/>
            <person name="Schuster S.C."/>
        </authorList>
    </citation>
    <scope>NUCLEOTIDE SEQUENCE [LARGE SCALE GENOMIC DNA]</scope>
    <source>
        <strain>ATCC 29543 / DSM 1740 / CCUG 13145 / JCM 31913 / LMG 7466 / NCTC 11488 / FDC 602W</strain>
    </source>
</reference>
<name>MIAB_WOLSU</name>
<dbReference type="EC" id="2.8.4.3" evidence="1"/>
<dbReference type="EMBL" id="BX571661">
    <property type="protein sequence ID" value="CAE10798.1"/>
    <property type="molecule type" value="Genomic_DNA"/>
</dbReference>
<dbReference type="RefSeq" id="WP_011139581.1">
    <property type="nucleotide sequence ID" value="NC_005090.1"/>
</dbReference>
<dbReference type="SMR" id="Q7MR25"/>
<dbReference type="STRING" id="273121.WS1776"/>
<dbReference type="KEGG" id="wsu:WS1776"/>
<dbReference type="eggNOG" id="COG0621">
    <property type="taxonomic scope" value="Bacteria"/>
</dbReference>
<dbReference type="HOGENOM" id="CLU_018697_2_0_7"/>
<dbReference type="Proteomes" id="UP000000422">
    <property type="component" value="Chromosome"/>
</dbReference>
<dbReference type="GO" id="GO:0005829">
    <property type="term" value="C:cytosol"/>
    <property type="evidence" value="ECO:0007669"/>
    <property type="project" value="TreeGrafter"/>
</dbReference>
<dbReference type="GO" id="GO:0051539">
    <property type="term" value="F:4 iron, 4 sulfur cluster binding"/>
    <property type="evidence" value="ECO:0007669"/>
    <property type="project" value="UniProtKB-UniRule"/>
</dbReference>
<dbReference type="GO" id="GO:0046872">
    <property type="term" value="F:metal ion binding"/>
    <property type="evidence" value="ECO:0007669"/>
    <property type="project" value="UniProtKB-KW"/>
</dbReference>
<dbReference type="GO" id="GO:0035597">
    <property type="term" value="F:N6-isopentenyladenosine methylthiotransferase activity"/>
    <property type="evidence" value="ECO:0007669"/>
    <property type="project" value="TreeGrafter"/>
</dbReference>
<dbReference type="CDD" id="cd01335">
    <property type="entry name" value="Radical_SAM"/>
    <property type="match status" value="1"/>
</dbReference>
<dbReference type="FunFam" id="3.40.50.12160:FF:000003">
    <property type="entry name" value="CDK5 regulatory subunit-associated protein 1"/>
    <property type="match status" value="1"/>
</dbReference>
<dbReference type="FunFam" id="3.80.30.20:FF:000001">
    <property type="entry name" value="tRNA-2-methylthio-N(6)-dimethylallyladenosine synthase 2"/>
    <property type="match status" value="1"/>
</dbReference>
<dbReference type="Gene3D" id="3.40.50.12160">
    <property type="entry name" value="Methylthiotransferase, N-terminal domain"/>
    <property type="match status" value="1"/>
</dbReference>
<dbReference type="Gene3D" id="3.80.30.20">
    <property type="entry name" value="tm_1862 like domain"/>
    <property type="match status" value="1"/>
</dbReference>
<dbReference type="HAMAP" id="MF_01864">
    <property type="entry name" value="tRNA_metthiotr_MiaB"/>
    <property type="match status" value="1"/>
</dbReference>
<dbReference type="InterPro" id="IPR006638">
    <property type="entry name" value="Elp3/MiaA/NifB-like_rSAM"/>
</dbReference>
<dbReference type="InterPro" id="IPR005839">
    <property type="entry name" value="Methylthiotransferase"/>
</dbReference>
<dbReference type="InterPro" id="IPR020612">
    <property type="entry name" value="Methylthiotransferase_CS"/>
</dbReference>
<dbReference type="InterPro" id="IPR013848">
    <property type="entry name" value="Methylthiotransferase_N"/>
</dbReference>
<dbReference type="InterPro" id="IPR038135">
    <property type="entry name" value="Methylthiotransferase_N_sf"/>
</dbReference>
<dbReference type="InterPro" id="IPR006463">
    <property type="entry name" value="MiaB_methiolase"/>
</dbReference>
<dbReference type="InterPro" id="IPR007197">
    <property type="entry name" value="rSAM"/>
</dbReference>
<dbReference type="InterPro" id="IPR023404">
    <property type="entry name" value="rSAM_horseshoe"/>
</dbReference>
<dbReference type="InterPro" id="IPR002792">
    <property type="entry name" value="TRAM_dom"/>
</dbReference>
<dbReference type="NCBIfam" id="TIGR01574">
    <property type="entry name" value="miaB-methiolase"/>
    <property type="match status" value="1"/>
</dbReference>
<dbReference type="NCBIfam" id="TIGR00089">
    <property type="entry name" value="MiaB/RimO family radical SAM methylthiotransferase"/>
    <property type="match status" value="1"/>
</dbReference>
<dbReference type="PANTHER" id="PTHR43020">
    <property type="entry name" value="CDK5 REGULATORY SUBUNIT-ASSOCIATED PROTEIN 1"/>
    <property type="match status" value="1"/>
</dbReference>
<dbReference type="PANTHER" id="PTHR43020:SF2">
    <property type="entry name" value="MITOCHONDRIAL TRNA METHYLTHIOTRANSFERASE CDK5RAP1"/>
    <property type="match status" value="1"/>
</dbReference>
<dbReference type="Pfam" id="PF04055">
    <property type="entry name" value="Radical_SAM"/>
    <property type="match status" value="1"/>
</dbReference>
<dbReference type="Pfam" id="PF01938">
    <property type="entry name" value="TRAM"/>
    <property type="match status" value="1"/>
</dbReference>
<dbReference type="Pfam" id="PF00919">
    <property type="entry name" value="UPF0004"/>
    <property type="match status" value="1"/>
</dbReference>
<dbReference type="SFLD" id="SFLDF00273">
    <property type="entry name" value="(dimethylallyl)adenosine_tRNA"/>
    <property type="match status" value="1"/>
</dbReference>
<dbReference type="SFLD" id="SFLDG01082">
    <property type="entry name" value="B12-binding_domain_containing"/>
    <property type="match status" value="1"/>
</dbReference>
<dbReference type="SFLD" id="SFLDS00029">
    <property type="entry name" value="Radical_SAM"/>
    <property type="match status" value="1"/>
</dbReference>
<dbReference type="SMART" id="SM00729">
    <property type="entry name" value="Elp3"/>
    <property type="match status" value="1"/>
</dbReference>
<dbReference type="SUPFAM" id="SSF102114">
    <property type="entry name" value="Radical SAM enzymes"/>
    <property type="match status" value="1"/>
</dbReference>
<dbReference type="PROSITE" id="PS51449">
    <property type="entry name" value="MTTASE_N"/>
    <property type="match status" value="1"/>
</dbReference>
<dbReference type="PROSITE" id="PS01278">
    <property type="entry name" value="MTTASE_RADICAL"/>
    <property type="match status" value="1"/>
</dbReference>
<dbReference type="PROSITE" id="PS51918">
    <property type="entry name" value="RADICAL_SAM"/>
    <property type="match status" value="1"/>
</dbReference>
<dbReference type="PROSITE" id="PS50926">
    <property type="entry name" value="TRAM"/>
    <property type="match status" value="1"/>
</dbReference>
<accession>Q7MR25</accession>
<keyword id="KW-0004">4Fe-4S</keyword>
<keyword id="KW-0963">Cytoplasm</keyword>
<keyword id="KW-0408">Iron</keyword>
<keyword id="KW-0411">Iron-sulfur</keyword>
<keyword id="KW-0479">Metal-binding</keyword>
<keyword id="KW-1185">Reference proteome</keyword>
<keyword id="KW-0949">S-adenosyl-L-methionine</keyword>
<keyword id="KW-0808">Transferase</keyword>
<keyword id="KW-0819">tRNA processing</keyword>
<sequence>MSKKLFIQTLGCAMNVRDSEHMIAELEAKEGYTLTDDPKEADLILINTCSVREKPERKLFSEIGQFSKEKKEEAKIGVCGCTASHLGSEILKKAPSVSFVLGARNVSKISRVIHQEKAVEVATDYDDSSYVFATGSRNDYKAMVNISIGCDKKCAYCIVPHTRGQEISVPSDLILGEARRLASAGVKEILLLGQNVNHYGRRFSSAHPKISFTELLRELSQVEGIERLRFTSPHPLHMDDEFLEEFASNPKICKSIHMPLQSGSTRILSLMRRGYSQEWFINRVERLKALAPETTIGTDIIVGFPGESEEDFLGTMEVLERVRFETLYSFVYSPRPHTEAASWENLVDEEVASERLHRLQARHKEILEELNQKEVGAIHSVLWEHQRRDEGWCEGRTDTGKMVRMKGGEEFLGRITPVRIKEAYRAFLIGEPL</sequence>
<comment type="function">
    <text evidence="1">Catalyzes the methylthiolation of N6-(dimethylallyl)adenosine (i(6)A), leading to the formation of 2-methylthio-N6-(dimethylallyl)adenosine (ms(2)i(6)A) at position 37 in tRNAs that read codons beginning with uridine.</text>
</comment>
<comment type="catalytic activity">
    <reaction evidence="1">
        <text>N(6)-dimethylallyladenosine(37) in tRNA + (sulfur carrier)-SH + AH2 + 2 S-adenosyl-L-methionine = 2-methylsulfanyl-N(6)-dimethylallyladenosine(37) in tRNA + (sulfur carrier)-H + 5'-deoxyadenosine + L-methionine + A + S-adenosyl-L-homocysteine + 2 H(+)</text>
        <dbReference type="Rhea" id="RHEA:37067"/>
        <dbReference type="Rhea" id="RHEA-COMP:10375"/>
        <dbReference type="Rhea" id="RHEA-COMP:10376"/>
        <dbReference type="Rhea" id="RHEA-COMP:14737"/>
        <dbReference type="Rhea" id="RHEA-COMP:14739"/>
        <dbReference type="ChEBI" id="CHEBI:13193"/>
        <dbReference type="ChEBI" id="CHEBI:15378"/>
        <dbReference type="ChEBI" id="CHEBI:17319"/>
        <dbReference type="ChEBI" id="CHEBI:17499"/>
        <dbReference type="ChEBI" id="CHEBI:29917"/>
        <dbReference type="ChEBI" id="CHEBI:57844"/>
        <dbReference type="ChEBI" id="CHEBI:57856"/>
        <dbReference type="ChEBI" id="CHEBI:59789"/>
        <dbReference type="ChEBI" id="CHEBI:64428"/>
        <dbReference type="ChEBI" id="CHEBI:74415"/>
        <dbReference type="ChEBI" id="CHEBI:74417"/>
        <dbReference type="EC" id="2.8.4.3"/>
    </reaction>
</comment>
<comment type="cofactor">
    <cofactor evidence="1">
        <name>[4Fe-4S] cluster</name>
        <dbReference type="ChEBI" id="CHEBI:49883"/>
    </cofactor>
    <text evidence="1">Binds 2 [4Fe-4S] clusters. One cluster is coordinated with 3 cysteines and an exchangeable S-adenosyl-L-methionine.</text>
</comment>
<comment type="subunit">
    <text evidence="1">Monomer.</text>
</comment>
<comment type="subcellular location">
    <subcellularLocation>
        <location evidence="1">Cytoplasm</location>
    </subcellularLocation>
</comment>
<comment type="similarity">
    <text evidence="1">Belongs to the methylthiotransferase family. MiaB subfamily.</text>
</comment>
<organism>
    <name type="scientific">Wolinella succinogenes (strain ATCC 29543 / DSM 1740 / CCUG 13145 / JCM 31913 / LMG 7466 / NCTC 11488 / FDC 602W)</name>
    <name type="common">Vibrio succinogenes</name>
    <dbReference type="NCBI Taxonomy" id="273121"/>
    <lineage>
        <taxon>Bacteria</taxon>
        <taxon>Pseudomonadati</taxon>
        <taxon>Campylobacterota</taxon>
        <taxon>Epsilonproteobacteria</taxon>
        <taxon>Campylobacterales</taxon>
        <taxon>Helicobacteraceae</taxon>
        <taxon>Wolinella</taxon>
    </lineage>
</organism>
<feature type="chain" id="PRO_0000374640" description="tRNA-2-methylthio-N(6)-dimethylallyladenosine synthase">
    <location>
        <begin position="1"/>
        <end position="433"/>
    </location>
</feature>
<feature type="domain" description="MTTase N-terminal" evidence="1">
    <location>
        <begin position="3"/>
        <end position="118"/>
    </location>
</feature>
<feature type="domain" description="Radical SAM core" evidence="2">
    <location>
        <begin position="136"/>
        <end position="369"/>
    </location>
</feature>
<feature type="domain" description="TRAM" evidence="1">
    <location>
        <begin position="372"/>
        <end position="433"/>
    </location>
</feature>
<feature type="binding site" evidence="1">
    <location>
        <position position="12"/>
    </location>
    <ligand>
        <name>[4Fe-4S] cluster</name>
        <dbReference type="ChEBI" id="CHEBI:49883"/>
        <label>1</label>
    </ligand>
</feature>
<feature type="binding site" evidence="1">
    <location>
        <position position="49"/>
    </location>
    <ligand>
        <name>[4Fe-4S] cluster</name>
        <dbReference type="ChEBI" id="CHEBI:49883"/>
        <label>1</label>
    </ligand>
</feature>
<feature type="binding site" evidence="1">
    <location>
        <position position="81"/>
    </location>
    <ligand>
        <name>[4Fe-4S] cluster</name>
        <dbReference type="ChEBI" id="CHEBI:49883"/>
        <label>1</label>
    </ligand>
</feature>
<feature type="binding site" evidence="1">
    <location>
        <position position="150"/>
    </location>
    <ligand>
        <name>[4Fe-4S] cluster</name>
        <dbReference type="ChEBI" id="CHEBI:49883"/>
        <label>2</label>
        <note>4Fe-4S-S-AdoMet</note>
    </ligand>
</feature>
<feature type="binding site" evidence="1">
    <location>
        <position position="154"/>
    </location>
    <ligand>
        <name>[4Fe-4S] cluster</name>
        <dbReference type="ChEBI" id="CHEBI:49883"/>
        <label>2</label>
        <note>4Fe-4S-S-AdoMet</note>
    </ligand>
</feature>
<feature type="binding site" evidence="1">
    <location>
        <position position="157"/>
    </location>
    <ligand>
        <name>[4Fe-4S] cluster</name>
        <dbReference type="ChEBI" id="CHEBI:49883"/>
        <label>2</label>
        <note>4Fe-4S-S-AdoMet</note>
    </ligand>
</feature>
<evidence type="ECO:0000255" key="1">
    <source>
        <dbReference type="HAMAP-Rule" id="MF_01864"/>
    </source>
</evidence>
<evidence type="ECO:0000255" key="2">
    <source>
        <dbReference type="PROSITE-ProRule" id="PRU01266"/>
    </source>
</evidence>
<protein>
    <recommendedName>
        <fullName evidence="1">tRNA-2-methylthio-N(6)-dimethylallyladenosine synthase</fullName>
        <ecNumber evidence="1">2.8.4.3</ecNumber>
    </recommendedName>
    <alternativeName>
        <fullName evidence="1">(Dimethylallyl)adenosine tRNA methylthiotransferase MiaB</fullName>
    </alternativeName>
    <alternativeName>
        <fullName evidence="1">tRNA-i(6)A37 methylthiotransferase</fullName>
    </alternativeName>
</protein>
<gene>
    <name evidence="1" type="primary">miaB</name>
    <name type="ordered locus">WS1776</name>
</gene>
<proteinExistence type="inferred from homology"/>